<proteinExistence type="inferred from homology"/>
<gene>
    <name evidence="1" type="primary">miaB</name>
    <name type="ordered locus">Mlg_0394</name>
</gene>
<protein>
    <recommendedName>
        <fullName evidence="1">tRNA-2-methylthio-N(6)-dimethylallyladenosine synthase</fullName>
        <ecNumber evidence="1">2.8.4.3</ecNumber>
    </recommendedName>
    <alternativeName>
        <fullName evidence="1">(Dimethylallyl)adenosine tRNA methylthiotransferase MiaB</fullName>
    </alternativeName>
    <alternativeName>
        <fullName evidence="1">tRNA-i(6)A37 methylthiotransferase</fullName>
    </alternativeName>
</protein>
<comment type="function">
    <text evidence="1">Catalyzes the methylthiolation of N6-(dimethylallyl)adenosine (i(6)A), leading to the formation of 2-methylthio-N6-(dimethylallyl)adenosine (ms(2)i(6)A) at position 37 in tRNAs that read codons beginning with uridine.</text>
</comment>
<comment type="catalytic activity">
    <reaction evidence="1">
        <text>N(6)-dimethylallyladenosine(37) in tRNA + (sulfur carrier)-SH + AH2 + 2 S-adenosyl-L-methionine = 2-methylsulfanyl-N(6)-dimethylallyladenosine(37) in tRNA + (sulfur carrier)-H + 5'-deoxyadenosine + L-methionine + A + S-adenosyl-L-homocysteine + 2 H(+)</text>
        <dbReference type="Rhea" id="RHEA:37067"/>
        <dbReference type="Rhea" id="RHEA-COMP:10375"/>
        <dbReference type="Rhea" id="RHEA-COMP:10376"/>
        <dbReference type="Rhea" id="RHEA-COMP:14737"/>
        <dbReference type="Rhea" id="RHEA-COMP:14739"/>
        <dbReference type="ChEBI" id="CHEBI:13193"/>
        <dbReference type="ChEBI" id="CHEBI:15378"/>
        <dbReference type="ChEBI" id="CHEBI:17319"/>
        <dbReference type="ChEBI" id="CHEBI:17499"/>
        <dbReference type="ChEBI" id="CHEBI:29917"/>
        <dbReference type="ChEBI" id="CHEBI:57844"/>
        <dbReference type="ChEBI" id="CHEBI:57856"/>
        <dbReference type="ChEBI" id="CHEBI:59789"/>
        <dbReference type="ChEBI" id="CHEBI:64428"/>
        <dbReference type="ChEBI" id="CHEBI:74415"/>
        <dbReference type="ChEBI" id="CHEBI:74417"/>
        <dbReference type="EC" id="2.8.4.3"/>
    </reaction>
</comment>
<comment type="cofactor">
    <cofactor evidence="1">
        <name>[4Fe-4S] cluster</name>
        <dbReference type="ChEBI" id="CHEBI:49883"/>
    </cofactor>
    <text evidence="1">Binds 2 [4Fe-4S] clusters. One cluster is coordinated with 3 cysteines and an exchangeable S-adenosyl-L-methionine.</text>
</comment>
<comment type="subunit">
    <text evidence="1">Monomer.</text>
</comment>
<comment type="subcellular location">
    <subcellularLocation>
        <location evidence="1">Cytoplasm</location>
    </subcellularLocation>
</comment>
<comment type="similarity">
    <text evidence="1">Belongs to the methylthiotransferase family. MiaB subfamily.</text>
</comment>
<comment type="sequence caution" evidence="3">
    <conflict type="erroneous initiation">
        <sequence resource="EMBL-CDS" id="ABI55748"/>
    </conflict>
</comment>
<reference key="1">
    <citation type="submission" date="2006-08" db="EMBL/GenBank/DDBJ databases">
        <title>Complete sequence of Alkalilimnicola ehrilichei MLHE-1.</title>
        <authorList>
            <person name="Copeland A."/>
            <person name="Lucas S."/>
            <person name="Lapidus A."/>
            <person name="Barry K."/>
            <person name="Detter J.C."/>
            <person name="Glavina del Rio T."/>
            <person name="Hammon N."/>
            <person name="Israni S."/>
            <person name="Dalin E."/>
            <person name="Tice H."/>
            <person name="Pitluck S."/>
            <person name="Sims D."/>
            <person name="Brettin T."/>
            <person name="Bruce D."/>
            <person name="Han C."/>
            <person name="Tapia R."/>
            <person name="Gilna P."/>
            <person name="Schmutz J."/>
            <person name="Larimer F."/>
            <person name="Land M."/>
            <person name="Hauser L."/>
            <person name="Kyrpides N."/>
            <person name="Mikhailova N."/>
            <person name="Oremland R.S."/>
            <person name="Hoeft S.E."/>
            <person name="Switzer-Blum J."/>
            <person name="Kulp T."/>
            <person name="King G."/>
            <person name="Tabita R."/>
            <person name="Witte B."/>
            <person name="Santini J.M."/>
            <person name="Basu P."/>
            <person name="Hollibaugh J.T."/>
            <person name="Xie G."/>
            <person name="Stolz J.F."/>
            <person name="Richardson P."/>
        </authorList>
    </citation>
    <scope>NUCLEOTIDE SEQUENCE [LARGE SCALE GENOMIC DNA]</scope>
    <source>
        <strain>ATCC BAA-1101 / DSM 17681 / MLHE-1</strain>
    </source>
</reference>
<sequence length="448" mass="49401">MTGRVYVKTHGCQMNEYDSDKMADVLVKERGYTRVDSPGDADVILLNTCSVREKAQEKVFSELGRWKDYKTRNGAVIGVGGCVASQEGEAIVQRAPHVDVVFGPQTLHRLPEMIDRARDGGRSVVDVSFPEIEKFDRLPEPRAEGPTAFVSIMEGCSKYCSFCVVPYTRGEEISRPFEDVIAEVASLAEQGVREVTLLGQNVNAYRGPMADGTVCDLALLIHYVAALDGIGRIRFTTSHPVEFSDSLIEAYREEPKLAGHLHLPVQSGSDLVLKLMKRGHTAAEYLDKIERIKAARPGISIASDFIVGYPGESEADFEDTLRLIEAVGFDQSFSFLYSPRPGTPAASLSDSTPAEVKRERLYRLQETINANARRISESMVGTVQRVLVDGRSRKDPNEISGRTENNRVVNFAGHPRLIGHFVEVRITEAKPNSLRGELLGLDDDMAAA</sequence>
<accession>Q0ABN9</accession>
<keyword id="KW-0004">4Fe-4S</keyword>
<keyword id="KW-0963">Cytoplasm</keyword>
<keyword id="KW-0408">Iron</keyword>
<keyword id="KW-0411">Iron-sulfur</keyword>
<keyword id="KW-0479">Metal-binding</keyword>
<keyword id="KW-1185">Reference proteome</keyword>
<keyword id="KW-0949">S-adenosyl-L-methionine</keyword>
<keyword id="KW-0808">Transferase</keyword>
<keyword id="KW-0819">tRNA processing</keyword>
<evidence type="ECO:0000255" key="1">
    <source>
        <dbReference type="HAMAP-Rule" id="MF_01864"/>
    </source>
</evidence>
<evidence type="ECO:0000255" key="2">
    <source>
        <dbReference type="PROSITE-ProRule" id="PRU01266"/>
    </source>
</evidence>
<evidence type="ECO:0000305" key="3"/>
<organism>
    <name type="scientific">Alkalilimnicola ehrlichii (strain ATCC BAA-1101 / DSM 17681 / MLHE-1)</name>
    <dbReference type="NCBI Taxonomy" id="187272"/>
    <lineage>
        <taxon>Bacteria</taxon>
        <taxon>Pseudomonadati</taxon>
        <taxon>Pseudomonadota</taxon>
        <taxon>Gammaproteobacteria</taxon>
        <taxon>Chromatiales</taxon>
        <taxon>Ectothiorhodospiraceae</taxon>
        <taxon>Alkalilimnicola</taxon>
    </lineage>
</organism>
<feature type="chain" id="PRO_0000374103" description="tRNA-2-methylthio-N(6)-dimethylallyladenosine synthase">
    <location>
        <begin position="1"/>
        <end position="448"/>
    </location>
</feature>
<feature type="domain" description="MTTase N-terminal" evidence="1">
    <location>
        <begin position="3"/>
        <end position="119"/>
    </location>
</feature>
<feature type="domain" description="Radical SAM core" evidence="2">
    <location>
        <begin position="142"/>
        <end position="374"/>
    </location>
</feature>
<feature type="domain" description="TRAM" evidence="1">
    <location>
        <begin position="377"/>
        <end position="440"/>
    </location>
</feature>
<feature type="binding site" evidence="1">
    <location>
        <position position="12"/>
    </location>
    <ligand>
        <name>[4Fe-4S] cluster</name>
        <dbReference type="ChEBI" id="CHEBI:49883"/>
        <label>1</label>
    </ligand>
</feature>
<feature type="binding site" evidence="1">
    <location>
        <position position="49"/>
    </location>
    <ligand>
        <name>[4Fe-4S] cluster</name>
        <dbReference type="ChEBI" id="CHEBI:49883"/>
        <label>1</label>
    </ligand>
</feature>
<feature type="binding site" evidence="1">
    <location>
        <position position="82"/>
    </location>
    <ligand>
        <name>[4Fe-4S] cluster</name>
        <dbReference type="ChEBI" id="CHEBI:49883"/>
        <label>1</label>
    </ligand>
</feature>
<feature type="binding site" evidence="1">
    <location>
        <position position="156"/>
    </location>
    <ligand>
        <name>[4Fe-4S] cluster</name>
        <dbReference type="ChEBI" id="CHEBI:49883"/>
        <label>2</label>
        <note>4Fe-4S-S-AdoMet</note>
    </ligand>
</feature>
<feature type="binding site" evidence="1">
    <location>
        <position position="160"/>
    </location>
    <ligand>
        <name>[4Fe-4S] cluster</name>
        <dbReference type="ChEBI" id="CHEBI:49883"/>
        <label>2</label>
        <note>4Fe-4S-S-AdoMet</note>
    </ligand>
</feature>
<feature type="binding site" evidence="1">
    <location>
        <position position="163"/>
    </location>
    <ligand>
        <name>[4Fe-4S] cluster</name>
        <dbReference type="ChEBI" id="CHEBI:49883"/>
        <label>2</label>
        <note>4Fe-4S-S-AdoMet</note>
    </ligand>
</feature>
<name>MIAB_ALKEH</name>
<dbReference type="EC" id="2.8.4.3" evidence="1"/>
<dbReference type="EMBL" id="CP000453">
    <property type="protein sequence ID" value="ABI55748.1"/>
    <property type="status" value="ALT_INIT"/>
    <property type="molecule type" value="Genomic_DNA"/>
</dbReference>
<dbReference type="RefSeq" id="WP_041717873.1">
    <property type="nucleotide sequence ID" value="NC_008340.1"/>
</dbReference>
<dbReference type="SMR" id="Q0ABN9"/>
<dbReference type="KEGG" id="aeh:Mlg_0394"/>
<dbReference type="eggNOG" id="COG0621">
    <property type="taxonomic scope" value="Bacteria"/>
</dbReference>
<dbReference type="HOGENOM" id="CLU_018697_2_0_6"/>
<dbReference type="OrthoDB" id="9805215at2"/>
<dbReference type="Proteomes" id="UP000001962">
    <property type="component" value="Chromosome"/>
</dbReference>
<dbReference type="GO" id="GO:0005829">
    <property type="term" value="C:cytosol"/>
    <property type="evidence" value="ECO:0007669"/>
    <property type="project" value="TreeGrafter"/>
</dbReference>
<dbReference type="GO" id="GO:0051539">
    <property type="term" value="F:4 iron, 4 sulfur cluster binding"/>
    <property type="evidence" value="ECO:0007669"/>
    <property type="project" value="UniProtKB-UniRule"/>
</dbReference>
<dbReference type="GO" id="GO:0046872">
    <property type="term" value="F:metal ion binding"/>
    <property type="evidence" value="ECO:0007669"/>
    <property type="project" value="UniProtKB-KW"/>
</dbReference>
<dbReference type="GO" id="GO:0035597">
    <property type="term" value="F:N6-isopentenyladenosine methylthiotransferase activity"/>
    <property type="evidence" value="ECO:0007669"/>
    <property type="project" value="TreeGrafter"/>
</dbReference>
<dbReference type="CDD" id="cd01335">
    <property type="entry name" value="Radical_SAM"/>
    <property type="match status" value="1"/>
</dbReference>
<dbReference type="FunFam" id="3.40.50.12160:FF:000001">
    <property type="entry name" value="tRNA-2-methylthio-N(6)-dimethylallyladenosine synthase"/>
    <property type="match status" value="1"/>
</dbReference>
<dbReference type="FunFam" id="3.80.30.20:FF:000001">
    <property type="entry name" value="tRNA-2-methylthio-N(6)-dimethylallyladenosine synthase 2"/>
    <property type="match status" value="1"/>
</dbReference>
<dbReference type="Gene3D" id="3.40.50.12160">
    <property type="entry name" value="Methylthiotransferase, N-terminal domain"/>
    <property type="match status" value="1"/>
</dbReference>
<dbReference type="Gene3D" id="3.80.30.20">
    <property type="entry name" value="tm_1862 like domain"/>
    <property type="match status" value="1"/>
</dbReference>
<dbReference type="HAMAP" id="MF_01864">
    <property type="entry name" value="tRNA_metthiotr_MiaB"/>
    <property type="match status" value="1"/>
</dbReference>
<dbReference type="InterPro" id="IPR006638">
    <property type="entry name" value="Elp3/MiaA/NifB-like_rSAM"/>
</dbReference>
<dbReference type="InterPro" id="IPR005839">
    <property type="entry name" value="Methylthiotransferase"/>
</dbReference>
<dbReference type="InterPro" id="IPR020612">
    <property type="entry name" value="Methylthiotransferase_CS"/>
</dbReference>
<dbReference type="InterPro" id="IPR013848">
    <property type="entry name" value="Methylthiotransferase_N"/>
</dbReference>
<dbReference type="InterPro" id="IPR038135">
    <property type="entry name" value="Methylthiotransferase_N_sf"/>
</dbReference>
<dbReference type="InterPro" id="IPR006463">
    <property type="entry name" value="MiaB_methiolase"/>
</dbReference>
<dbReference type="InterPro" id="IPR007197">
    <property type="entry name" value="rSAM"/>
</dbReference>
<dbReference type="InterPro" id="IPR023404">
    <property type="entry name" value="rSAM_horseshoe"/>
</dbReference>
<dbReference type="InterPro" id="IPR002792">
    <property type="entry name" value="TRAM_dom"/>
</dbReference>
<dbReference type="NCBIfam" id="TIGR01574">
    <property type="entry name" value="miaB-methiolase"/>
    <property type="match status" value="1"/>
</dbReference>
<dbReference type="NCBIfam" id="TIGR00089">
    <property type="entry name" value="MiaB/RimO family radical SAM methylthiotransferase"/>
    <property type="match status" value="1"/>
</dbReference>
<dbReference type="PANTHER" id="PTHR43020">
    <property type="entry name" value="CDK5 REGULATORY SUBUNIT-ASSOCIATED PROTEIN 1"/>
    <property type="match status" value="1"/>
</dbReference>
<dbReference type="PANTHER" id="PTHR43020:SF2">
    <property type="entry name" value="MITOCHONDRIAL TRNA METHYLTHIOTRANSFERASE CDK5RAP1"/>
    <property type="match status" value="1"/>
</dbReference>
<dbReference type="Pfam" id="PF04055">
    <property type="entry name" value="Radical_SAM"/>
    <property type="match status" value="1"/>
</dbReference>
<dbReference type="Pfam" id="PF01938">
    <property type="entry name" value="TRAM"/>
    <property type="match status" value="1"/>
</dbReference>
<dbReference type="Pfam" id="PF00919">
    <property type="entry name" value="UPF0004"/>
    <property type="match status" value="1"/>
</dbReference>
<dbReference type="SFLD" id="SFLDF00273">
    <property type="entry name" value="(dimethylallyl)adenosine_tRNA"/>
    <property type="match status" value="1"/>
</dbReference>
<dbReference type="SFLD" id="SFLDG01082">
    <property type="entry name" value="B12-binding_domain_containing"/>
    <property type="match status" value="1"/>
</dbReference>
<dbReference type="SFLD" id="SFLDS00029">
    <property type="entry name" value="Radical_SAM"/>
    <property type="match status" value="1"/>
</dbReference>
<dbReference type="SMART" id="SM00729">
    <property type="entry name" value="Elp3"/>
    <property type="match status" value="1"/>
</dbReference>
<dbReference type="SUPFAM" id="SSF102114">
    <property type="entry name" value="Radical SAM enzymes"/>
    <property type="match status" value="1"/>
</dbReference>
<dbReference type="PROSITE" id="PS51449">
    <property type="entry name" value="MTTASE_N"/>
    <property type="match status" value="1"/>
</dbReference>
<dbReference type="PROSITE" id="PS01278">
    <property type="entry name" value="MTTASE_RADICAL"/>
    <property type="match status" value="1"/>
</dbReference>
<dbReference type="PROSITE" id="PS51918">
    <property type="entry name" value="RADICAL_SAM"/>
    <property type="match status" value="1"/>
</dbReference>
<dbReference type="PROSITE" id="PS50926">
    <property type="entry name" value="TRAM"/>
    <property type="match status" value="1"/>
</dbReference>